<gene>
    <name evidence="1" type="primary">cysI</name>
</gene>
<proteinExistence type="inferred from homology"/>
<keyword id="KW-0004">4Fe-4S</keyword>
<keyword id="KW-0028">Amino-acid biosynthesis</keyword>
<keyword id="KW-0198">Cysteine biosynthesis</keyword>
<keyword id="KW-0349">Heme</keyword>
<keyword id="KW-0408">Iron</keyword>
<keyword id="KW-0411">Iron-sulfur</keyword>
<keyword id="KW-0479">Metal-binding</keyword>
<keyword id="KW-0521">NADP</keyword>
<keyword id="KW-0560">Oxidoreductase</keyword>
<comment type="function">
    <text evidence="1">Component of the sulfite reductase complex that catalyzes the 6-electron reduction of sulfite to sulfide. This is one of several activities required for the biosynthesis of L-cysteine from sulfate.</text>
</comment>
<comment type="catalytic activity">
    <reaction evidence="1">
        <text>hydrogen sulfide + 3 NADP(+) + 3 H2O = sulfite + 3 NADPH + 4 H(+)</text>
        <dbReference type="Rhea" id="RHEA:13801"/>
        <dbReference type="ChEBI" id="CHEBI:15377"/>
        <dbReference type="ChEBI" id="CHEBI:15378"/>
        <dbReference type="ChEBI" id="CHEBI:17359"/>
        <dbReference type="ChEBI" id="CHEBI:29919"/>
        <dbReference type="ChEBI" id="CHEBI:57783"/>
        <dbReference type="ChEBI" id="CHEBI:58349"/>
        <dbReference type="EC" id="1.8.1.2"/>
    </reaction>
</comment>
<comment type="cofactor">
    <cofactor evidence="1">
        <name>siroheme</name>
        <dbReference type="ChEBI" id="CHEBI:60052"/>
    </cofactor>
    <text evidence="1">Binds 1 siroheme per subunit.</text>
</comment>
<comment type="cofactor">
    <cofactor evidence="1">
        <name>[4Fe-4S] cluster</name>
        <dbReference type="ChEBI" id="CHEBI:49883"/>
    </cofactor>
    <text evidence="1">Binds 1 [4Fe-4S] cluster per subunit.</text>
</comment>
<comment type="pathway">
    <text evidence="1">Sulfur metabolism; hydrogen sulfide biosynthesis; hydrogen sulfide from sulfite (NADPH route): step 1/1.</text>
</comment>
<comment type="subunit">
    <text evidence="1">Alpha(8)-beta(8). The alpha component is a flavoprotein, the beta component is a hemoprotein.</text>
</comment>
<comment type="similarity">
    <text evidence="1">Belongs to the nitrite and sulfite reductase 4Fe-4S domain family.</text>
</comment>
<dbReference type="EC" id="1.8.1.2" evidence="1"/>
<dbReference type="EMBL" id="Z23169">
    <property type="protein sequence ID" value="CAA80688.1"/>
    <property type="molecule type" value="Genomic_DNA"/>
</dbReference>
<dbReference type="PIR" id="S34191">
    <property type="entry name" value="S34191"/>
</dbReference>
<dbReference type="SMR" id="P52673"/>
<dbReference type="STRING" id="1058.SAMN05421783_107103"/>
<dbReference type="UniPathway" id="UPA00140">
    <property type="reaction ID" value="UER00207"/>
</dbReference>
<dbReference type="GO" id="GO:0009337">
    <property type="term" value="C:sulfite reductase complex (NADPH)"/>
    <property type="evidence" value="ECO:0007669"/>
    <property type="project" value="InterPro"/>
</dbReference>
<dbReference type="GO" id="GO:0051539">
    <property type="term" value="F:4 iron, 4 sulfur cluster binding"/>
    <property type="evidence" value="ECO:0007669"/>
    <property type="project" value="UniProtKB-KW"/>
</dbReference>
<dbReference type="GO" id="GO:0020037">
    <property type="term" value="F:heme binding"/>
    <property type="evidence" value="ECO:0007669"/>
    <property type="project" value="InterPro"/>
</dbReference>
<dbReference type="GO" id="GO:0046872">
    <property type="term" value="F:metal ion binding"/>
    <property type="evidence" value="ECO:0007669"/>
    <property type="project" value="UniProtKB-KW"/>
</dbReference>
<dbReference type="GO" id="GO:0050661">
    <property type="term" value="F:NADP binding"/>
    <property type="evidence" value="ECO:0007669"/>
    <property type="project" value="InterPro"/>
</dbReference>
<dbReference type="GO" id="GO:0050311">
    <property type="term" value="F:sulfite reductase (ferredoxin) activity"/>
    <property type="evidence" value="ECO:0007669"/>
    <property type="project" value="TreeGrafter"/>
</dbReference>
<dbReference type="GO" id="GO:0004783">
    <property type="term" value="F:sulfite reductase (NADPH) activity"/>
    <property type="evidence" value="ECO:0007669"/>
    <property type="project" value="UniProtKB-UniRule"/>
</dbReference>
<dbReference type="GO" id="GO:0019344">
    <property type="term" value="P:cysteine biosynthetic process"/>
    <property type="evidence" value="ECO:0007669"/>
    <property type="project" value="UniProtKB-KW"/>
</dbReference>
<dbReference type="GO" id="GO:0070814">
    <property type="term" value="P:hydrogen sulfide biosynthetic process"/>
    <property type="evidence" value="ECO:0007669"/>
    <property type="project" value="UniProtKB-UniRule"/>
</dbReference>
<dbReference type="GO" id="GO:0000103">
    <property type="term" value="P:sulfate assimilation"/>
    <property type="evidence" value="ECO:0007669"/>
    <property type="project" value="UniProtKB-UniRule"/>
</dbReference>
<dbReference type="FunFam" id="3.30.413.10:FF:000003">
    <property type="entry name" value="Sulfite reductase [NADPH] hemoprotein beta-component"/>
    <property type="match status" value="1"/>
</dbReference>
<dbReference type="Gene3D" id="3.30.413.10">
    <property type="entry name" value="Sulfite Reductase Hemoprotein, domain 1"/>
    <property type="match status" value="2"/>
</dbReference>
<dbReference type="HAMAP" id="MF_01540">
    <property type="entry name" value="CysI"/>
    <property type="match status" value="1"/>
</dbReference>
<dbReference type="InterPro" id="IPR011786">
    <property type="entry name" value="CysI"/>
</dbReference>
<dbReference type="InterPro" id="IPR005117">
    <property type="entry name" value="NiRdtase/SiRdtase_haem-b_fer"/>
</dbReference>
<dbReference type="InterPro" id="IPR036136">
    <property type="entry name" value="Nit/Sulf_reduc_fer-like_dom_sf"/>
</dbReference>
<dbReference type="InterPro" id="IPR006067">
    <property type="entry name" value="NO2/SO3_Rdtase_4Fe4S_dom"/>
</dbReference>
<dbReference type="InterPro" id="IPR045169">
    <property type="entry name" value="NO2/SO3_Rdtase_4Fe4S_prot"/>
</dbReference>
<dbReference type="InterPro" id="IPR045854">
    <property type="entry name" value="NO2/SO3_Rdtase_4Fe4S_sf"/>
</dbReference>
<dbReference type="InterPro" id="IPR006066">
    <property type="entry name" value="NO2/SO3_Rdtase_FeS/sirohaem_BS"/>
</dbReference>
<dbReference type="NCBIfam" id="TIGR02041">
    <property type="entry name" value="CysI"/>
    <property type="match status" value="1"/>
</dbReference>
<dbReference type="NCBIfam" id="NF010029">
    <property type="entry name" value="PRK13504.1"/>
    <property type="match status" value="1"/>
</dbReference>
<dbReference type="PANTHER" id="PTHR11493:SF47">
    <property type="entry name" value="SULFITE REDUCTASE [NADPH] SUBUNIT BETA"/>
    <property type="match status" value="1"/>
</dbReference>
<dbReference type="PANTHER" id="PTHR11493">
    <property type="entry name" value="SULFITE REDUCTASE [NADPH] SUBUNIT BETA-RELATED"/>
    <property type="match status" value="1"/>
</dbReference>
<dbReference type="Pfam" id="PF01077">
    <property type="entry name" value="NIR_SIR"/>
    <property type="match status" value="1"/>
</dbReference>
<dbReference type="Pfam" id="PF03460">
    <property type="entry name" value="NIR_SIR_ferr"/>
    <property type="match status" value="2"/>
</dbReference>
<dbReference type="PRINTS" id="PR00397">
    <property type="entry name" value="SIROHAEM"/>
</dbReference>
<dbReference type="SUPFAM" id="SSF56014">
    <property type="entry name" value="Nitrite and sulphite reductase 4Fe-4S domain-like"/>
    <property type="match status" value="2"/>
</dbReference>
<dbReference type="SUPFAM" id="SSF55124">
    <property type="entry name" value="Nitrite/Sulfite reductase N-terminal domain-like"/>
    <property type="match status" value="2"/>
</dbReference>
<dbReference type="PROSITE" id="PS00365">
    <property type="entry name" value="NIR_SIR"/>
    <property type="match status" value="1"/>
</dbReference>
<reference key="1">
    <citation type="journal article" date="1996" name="Biochim. Biophys. Acta">
        <title>A cDNA clone from Arabidopsis thaliana encoding plastidic ferredoxin:sulfite reductase.</title>
        <authorList>
            <person name="Bruehl A."/>
            <person name="Haverkamp T."/>
            <person name="Gisselmann G."/>
            <person name="Schwenn J.D."/>
        </authorList>
    </citation>
    <scope>NUCLEOTIDE SEQUENCE [GENOMIC DNA]</scope>
    <source>
        <strain>DSM 219 / 6311</strain>
    </source>
</reference>
<feature type="chain" id="PRO_0000199911" description="Sulfite reductase [NADPH] hemoprotein beta-component">
    <location>
        <begin position="1"/>
        <end position="559"/>
    </location>
</feature>
<feature type="binding site" evidence="1">
    <location>
        <position position="423"/>
    </location>
    <ligand>
        <name>[4Fe-4S] cluster</name>
        <dbReference type="ChEBI" id="CHEBI:49883"/>
    </ligand>
</feature>
<feature type="binding site" evidence="1">
    <location>
        <position position="429"/>
    </location>
    <ligand>
        <name>[4Fe-4S] cluster</name>
        <dbReference type="ChEBI" id="CHEBI:49883"/>
    </ligand>
</feature>
<feature type="binding site" evidence="1">
    <location>
        <position position="468"/>
    </location>
    <ligand>
        <name>[4Fe-4S] cluster</name>
        <dbReference type="ChEBI" id="CHEBI:49883"/>
    </ligand>
</feature>
<feature type="binding site" evidence="1">
    <location>
        <position position="472"/>
    </location>
    <ligand>
        <name>[4Fe-4S] cluster</name>
        <dbReference type="ChEBI" id="CHEBI:49883"/>
    </ligand>
</feature>
<feature type="binding site" description="axial binding residue" evidence="1">
    <location>
        <position position="472"/>
    </location>
    <ligand>
        <name>siroheme</name>
        <dbReference type="ChEBI" id="CHEBI:60052"/>
    </ligand>
    <ligandPart>
        <name>Fe</name>
        <dbReference type="ChEBI" id="CHEBI:18248"/>
    </ligandPart>
</feature>
<protein>
    <recommendedName>
        <fullName evidence="1">Sulfite reductase [NADPH] hemoprotein beta-component</fullName>
        <shortName evidence="1">SiR-HP</shortName>
        <shortName evidence="1">SiRHP</shortName>
        <ecNumber evidence="1">1.8.1.2</ecNumber>
    </recommendedName>
</protein>
<evidence type="ECO:0000255" key="1">
    <source>
        <dbReference type="HAMAP-Rule" id="MF_01540"/>
    </source>
</evidence>
<name>CYSI_THIRO</name>
<sequence>MSAPIHENERIKARSNCLRGTLRESLADTLTGAISPEDTQISKFHGFYQQDHRDRRQARPEQYLEPYFGFMLRAPLPGGVCTPAQWLAIDGMGRELGGGSLRLTTRQSFQYHGILKRDIASVIRGINAVMIDSIGGCGDVNRNVLCNPNPVESALHREVYDWAKRISEHLLPRTRAYHEIWLDGEQVGGGEDVEPIYGRTYLPRKFKTAVGVPPHNDVDVYANDLGFAAVADGSRLIGFNVSAGGTGRNTGIPATFPRLADVLGFVEPERTLAVAEAVVTTQRHFGDRLDRTQARLKYTIERMGLDAFRDEVERRAGIRFAPARPIGFTDQGDRTAWVRGQDGRWHLTLYIESGRLIDGPGQSSMQGLREIARIHQGDFRITPNQNLIVARVPEPGKSEIEALARKYGLLDKGIALRLNGMSCVALPTCPLAMAEAERYYPDFLAQVERLTRKHGLAEQEIVTRMTGCPNGCARPYLAELALVGKGPGRYNLMLGGNGRRYRLNRLYRENLDEAAILAEIDTLLGRYAACRQPGERFGDYLIRDGIVRPVVNPAEDFHE</sequence>
<accession>P52673</accession>
<organism>
    <name type="scientific">Thiocapsa roseopersicina</name>
    <dbReference type="NCBI Taxonomy" id="1058"/>
    <lineage>
        <taxon>Bacteria</taxon>
        <taxon>Pseudomonadati</taxon>
        <taxon>Pseudomonadota</taxon>
        <taxon>Gammaproteobacteria</taxon>
        <taxon>Chromatiales</taxon>
        <taxon>Chromatiaceae</taxon>
        <taxon>Thiocapsa</taxon>
    </lineage>
</organism>